<sequence length="181" mass="20464">MSELKQAAAPEQALVVGRITSVYGVKGWVKLYSHTEPMQGIFDYKHWWLKTPSGWKTVELSQGRLQGRGLVASVKGYTDRDQVKDICGMDVYIDAAELPELEEGDYYWSQLEGLRVITKEGVLLGKVSQLMETGANDVIVVRACEGSFDREERLIPYAPGTYVLNIDLEQQEMVVDWDPEF</sequence>
<feature type="chain" id="PRO_0000351771" description="Ribosome maturation factor RimM">
    <location>
        <begin position="1"/>
        <end position="181"/>
    </location>
</feature>
<feature type="domain" description="PRC barrel" evidence="1">
    <location>
        <begin position="103"/>
        <end position="181"/>
    </location>
</feature>
<comment type="function">
    <text evidence="1">An accessory protein needed during the final step in the assembly of 30S ribosomal subunit, possibly for assembly of the head region. Essential for efficient processing of 16S rRNA. May be needed both before and after RbfA during the maturation of 16S rRNA. It has affinity for free ribosomal 30S subunits but not for 70S ribosomes.</text>
</comment>
<comment type="subunit">
    <text evidence="1">Binds ribosomal protein uS19.</text>
</comment>
<comment type="subcellular location">
    <subcellularLocation>
        <location evidence="1">Cytoplasm</location>
    </subcellularLocation>
</comment>
<comment type="domain">
    <text evidence="1">The PRC barrel domain binds ribosomal protein uS19.</text>
</comment>
<comment type="similarity">
    <text evidence="1">Belongs to the RimM family.</text>
</comment>
<name>RIMM_MARMS</name>
<organism>
    <name type="scientific">Marinomonas sp. (strain MWYL1)</name>
    <dbReference type="NCBI Taxonomy" id="400668"/>
    <lineage>
        <taxon>Bacteria</taxon>
        <taxon>Pseudomonadati</taxon>
        <taxon>Pseudomonadota</taxon>
        <taxon>Gammaproteobacteria</taxon>
        <taxon>Oceanospirillales</taxon>
        <taxon>Oceanospirillaceae</taxon>
        <taxon>Marinomonas</taxon>
    </lineage>
</organism>
<proteinExistence type="inferred from homology"/>
<keyword id="KW-0143">Chaperone</keyword>
<keyword id="KW-0963">Cytoplasm</keyword>
<keyword id="KW-0690">Ribosome biogenesis</keyword>
<keyword id="KW-0698">rRNA processing</keyword>
<dbReference type="EMBL" id="CP000749">
    <property type="protein sequence ID" value="ABR72670.1"/>
    <property type="molecule type" value="Genomic_DNA"/>
</dbReference>
<dbReference type="SMR" id="A6W1U1"/>
<dbReference type="STRING" id="400668.Mmwyl1_3769"/>
<dbReference type="KEGG" id="mmw:Mmwyl1_3769"/>
<dbReference type="eggNOG" id="COG0806">
    <property type="taxonomic scope" value="Bacteria"/>
</dbReference>
<dbReference type="HOGENOM" id="CLU_077636_1_0_6"/>
<dbReference type="OrthoDB" id="9783509at2"/>
<dbReference type="GO" id="GO:0005737">
    <property type="term" value="C:cytoplasm"/>
    <property type="evidence" value="ECO:0007669"/>
    <property type="project" value="UniProtKB-SubCell"/>
</dbReference>
<dbReference type="GO" id="GO:0005840">
    <property type="term" value="C:ribosome"/>
    <property type="evidence" value="ECO:0007669"/>
    <property type="project" value="InterPro"/>
</dbReference>
<dbReference type="GO" id="GO:0043022">
    <property type="term" value="F:ribosome binding"/>
    <property type="evidence" value="ECO:0007669"/>
    <property type="project" value="InterPro"/>
</dbReference>
<dbReference type="GO" id="GO:0042274">
    <property type="term" value="P:ribosomal small subunit biogenesis"/>
    <property type="evidence" value="ECO:0007669"/>
    <property type="project" value="UniProtKB-UniRule"/>
</dbReference>
<dbReference type="GO" id="GO:0006364">
    <property type="term" value="P:rRNA processing"/>
    <property type="evidence" value="ECO:0007669"/>
    <property type="project" value="UniProtKB-UniRule"/>
</dbReference>
<dbReference type="Gene3D" id="2.30.30.240">
    <property type="entry name" value="PRC-barrel domain"/>
    <property type="match status" value="1"/>
</dbReference>
<dbReference type="Gene3D" id="2.40.30.60">
    <property type="entry name" value="RimM"/>
    <property type="match status" value="1"/>
</dbReference>
<dbReference type="HAMAP" id="MF_00014">
    <property type="entry name" value="Ribosome_mat_RimM"/>
    <property type="match status" value="1"/>
</dbReference>
<dbReference type="InterPro" id="IPR027275">
    <property type="entry name" value="PRC-brl_dom"/>
</dbReference>
<dbReference type="InterPro" id="IPR011033">
    <property type="entry name" value="PRC_barrel-like_sf"/>
</dbReference>
<dbReference type="InterPro" id="IPR011961">
    <property type="entry name" value="RimM"/>
</dbReference>
<dbReference type="InterPro" id="IPR002676">
    <property type="entry name" value="RimM_N"/>
</dbReference>
<dbReference type="InterPro" id="IPR036976">
    <property type="entry name" value="RimM_N_sf"/>
</dbReference>
<dbReference type="InterPro" id="IPR009000">
    <property type="entry name" value="Transl_B-barrel_sf"/>
</dbReference>
<dbReference type="NCBIfam" id="TIGR02273">
    <property type="entry name" value="16S_RimM"/>
    <property type="match status" value="1"/>
</dbReference>
<dbReference type="PANTHER" id="PTHR33692">
    <property type="entry name" value="RIBOSOME MATURATION FACTOR RIMM"/>
    <property type="match status" value="1"/>
</dbReference>
<dbReference type="PANTHER" id="PTHR33692:SF1">
    <property type="entry name" value="RIBOSOME MATURATION FACTOR RIMM"/>
    <property type="match status" value="1"/>
</dbReference>
<dbReference type="Pfam" id="PF05239">
    <property type="entry name" value="PRC"/>
    <property type="match status" value="1"/>
</dbReference>
<dbReference type="Pfam" id="PF01782">
    <property type="entry name" value="RimM"/>
    <property type="match status" value="1"/>
</dbReference>
<dbReference type="SUPFAM" id="SSF50346">
    <property type="entry name" value="PRC-barrel domain"/>
    <property type="match status" value="1"/>
</dbReference>
<dbReference type="SUPFAM" id="SSF50447">
    <property type="entry name" value="Translation proteins"/>
    <property type="match status" value="1"/>
</dbReference>
<protein>
    <recommendedName>
        <fullName evidence="1">Ribosome maturation factor RimM</fullName>
    </recommendedName>
</protein>
<accession>A6W1U1</accession>
<reference key="1">
    <citation type="submission" date="2007-06" db="EMBL/GenBank/DDBJ databases">
        <title>Complete sequence of Marinomonas sp. MWYL1.</title>
        <authorList>
            <consortium name="US DOE Joint Genome Institute"/>
            <person name="Copeland A."/>
            <person name="Lucas S."/>
            <person name="Lapidus A."/>
            <person name="Barry K."/>
            <person name="Glavina del Rio T."/>
            <person name="Dalin E."/>
            <person name="Tice H."/>
            <person name="Pitluck S."/>
            <person name="Kiss H."/>
            <person name="Brettin T."/>
            <person name="Bruce D."/>
            <person name="Detter J.C."/>
            <person name="Han C."/>
            <person name="Schmutz J."/>
            <person name="Larimer F."/>
            <person name="Land M."/>
            <person name="Hauser L."/>
            <person name="Kyrpides N."/>
            <person name="Kim E."/>
            <person name="Johnston A.W.B."/>
            <person name="Todd J.D."/>
            <person name="Rogers R."/>
            <person name="Wexler M."/>
            <person name="Bond P.L."/>
            <person name="Li Y."/>
            <person name="Richardson P."/>
        </authorList>
    </citation>
    <scope>NUCLEOTIDE SEQUENCE [LARGE SCALE GENOMIC DNA]</scope>
    <source>
        <strain>MWYL1</strain>
    </source>
</reference>
<evidence type="ECO:0000255" key="1">
    <source>
        <dbReference type="HAMAP-Rule" id="MF_00014"/>
    </source>
</evidence>
<gene>
    <name evidence="1" type="primary">rimM</name>
    <name type="ordered locus">Mmwyl1_3769</name>
</gene>